<comment type="function">
    <text evidence="1">Catalyzes the synthesis of alpha-ribazole-5'-phosphate from nicotinate mononucleotide (NAMN) and 5,6-dimethylbenzimidazole (DMB).</text>
</comment>
<comment type="catalytic activity">
    <reaction evidence="1">
        <text>5,6-dimethylbenzimidazole + nicotinate beta-D-ribonucleotide = alpha-ribazole 5'-phosphate + nicotinate + H(+)</text>
        <dbReference type="Rhea" id="RHEA:11196"/>
        <dbReference type="ChEBI" id="CHEBI:15378"/>
        <dbReference type="ChEBI" id="CHEBI:15890"/>
        <dbReference type="ChEBI" id="CHEBI:32544"/>
        <dbReference type="ChEBI" id="CHEBI:57502"/>
        <dbReference type="ChEBI" id="CHEBI:57918"/>
        <dbReference type="EC" id="2.4.2.21"/>
    </reaction>
</comment>
<comment type="pathway">
    <text evidence="1">Nucleoside biosynthesis; alpha-ribazole biosynthesis; alpha-ribazole from 5,6-dimethylbenzimidazole: step 1/2.</text>
</comment>
<comment type="similarity">
    <text evidence="1">Belongs to the CobT family.</text>
</comment>
<protein>
    <recommendedName>
        <fullName evidence="1">Nicotinate-nucleotide--dimethylbenzimidazole phosphoribosyltransferase</fullName>
        <shortName evidence="1">NN:DBI PRT</shortName>
        <ecNumber evidence="1">2.4.2.21</ecNumber>
    </recommendedName>
    <alternativeName>
        <fullName evidence="1">N(1)-alpha-phosphoribosyltransferase</fullName>
    </alternativeName>
</protein>
<proteinExistence type="inferred from homology"/>
<organism>
    <name type="scientific">Shewanella loihica (strain ATCC BAA-1088 / PV-4)</name>
    <dbReference type="NCBI Taxonomy" id="323850"/>
    <lineage>
        <taxon>Bacteria</taxon>
        <taxon>Pseudomonadati</taxon>
        <taxon>Pseudomonadota</taxon>
        <taxon>Gammaproteobacteria</taxon>
        <taxon>Alteromonadales</taxon>
        <taxon>Shewanellaceae</taxon>
        <taxon>Shewanella</taxon>
    </lineage>
</organism>
<feature type="chain" id="PRO_1000021628" description="Nicotinate-nucleotide--dimethylbenzimidazole phosphoribosyltransferase">
    <location>
        <begin position="1"/>
        <end position="342"/>
    </location>
</feature>
<feature type="active site" description="Proton acceptor" evidence="1">
    <location>
        <position position="311"/>
    </location>
</feature>
<dbReference type="EC" id="2.4.2.21" evidence="1"/>
<dbReference type="EMBL" id="CP000606">
    <property type="protein sequence ID" value="ABO22586.1"/>
    <property type="molecule type" value="Genomic_DNA"/>
</dbReference>
<dbReference type="RefSeq" id="WP_011864520.1">
    <property type="nucleotide sequence ID" value="NC_009092.1"/>
</dbReference>
<dbReference type="SMR" id="A3QAT8"/>
<dbReference type="STRING" id="323850.Shew_0714"/>
<dbReference type="KEGG" id="slo:Shew_0714"/>
<dbReference type="eggNOG" id="COG2038">
    <property type="taxonomic scope" value="Bacteria"/>
</dbReference>
<dbReference type="HOGENOM" id="CLU_002982_0_0_6"/>
<dbReference type="OrthoDB" id="9781491at2"/>
<dbReference type="UniPathway" id="UPA00061">
    <property type="reaction ID" value="UER00516"/>
</dbReference>
<dbReference type="Proteomes" id="UP000001558">
    <property type="component" value="Chromosome"/>
</dbReference>
<dbReference type="GO" id="GO:0008939">
    <property type="term" value="F:nicotinate-nucleotide-dimethylbenzimidazole phosphoribosyltransferase activity"/>
    <property type="evidence" value="ECO:0007669"/>
    <property type="project" value="UniProtKB-UniRule"/>
</dbReference>
<dbReference type="GO" id="GO:0009236">
    <property type="term" value="P:cobalamin biosynthetic process"/>
    <property type="evidence" value="ECO:0007669"/>
    <property type="project" value="UniProtKB-KW"/>
</dbReference>
<dbReference type="CDD" id="cd02439">
    <property type="entry name" value="DMB-PRT_CobT"/>
    <property type="match status" value="1"/>
</dbReference>
<dbReference type="FunFam" id="3.40.50.10210:FF:000001">
    <property type="entry name" value="Nicotinate-nucleotide--dimethylbenzimidazole phosphoribosyltransferase"/>
    <property type="match status" value="1"/>
</dbReference>
<dbReference type="Gene3D" id="1.10.1610.10">
    <property type="match status" value="1"/>
</dbReference>
<dbReference type="Gene3D" id="3.40.50.10210">
    <property type="match status" value="1"/>
</dbReference>
<dbReference type="HAMAP" id="MF_00230">
    <property type="entry name" value="CobT"/>
    <property type="match status" value="1"/>
</dbReference>
<dbReference type="InterPro" id="IPR003200">
    <property type="entry name" value="Nict_dMeBzImd_PRibTrfase"/>
</dbReference>
<dbReference type="InterPro" id="IPR017846">
    <property type="entry name" value="Nict_dMeBzImd_PRibTrfase_bact"/>
</dbReference>
<dbReference type="InterPro" id="IPR023195">
    <property type="entry name" value="Nict_dMeBzImd_PRibTrfase_N"/>
</dbReference>
<dbReference type="InterPro" id="IPR036087">
    <property type="entry name" value="Nict_dMeBzImd_PRibTrfase_sf"/>
</dbReference>
<dbReference type="NCBIfam" id="TIGR03160">
    <property type="entry name" value="cobT_DBIPRT"/>
    <property type="match status" value="1"/>
</dbReference>
<dbReference type="NCBIfam" id="NF000996">
    <property type="entry name" value="PRK00105.1"/>
    <property type="match status" value="1"/>
</dbReference>
<dbReference type="PANTHER" id="PTHR43463">
    <property type="entry name" value="NICOTINATE-NUCLEOTIDE--DIMETHYLBENZIMIDAZOLE PHOSPHORIBOSYLTRANSFERASE"/>
    <property type="match status" value="1"/>
</dbReference>
<dbReference type="PANTHER" id="PTHR43463:SF1">
    <property type="entry name" value="NICOTINATE-NUCLEOTIDE--DIMETHYLBENZIMIDAZOLE PHOSPHORIBOSYLTRANSFERASE"/>
    <property type="match status" value="1"/>
</dbReference>
<dbReference type="Pfam" id="PF02277">
    <property type="entry name" value="DBI_PRT"/>
    <property type="match status" value="1"/>
</dbReference>
<dbReference type="SUPFAM" id="SSF52733">
    <property type="entry name" value="Nicotinate mononucleotide:5,6-dimethylbenzimidazole phosphoribosyltransferase (CobT)"/>
    <property type="match status" value="1"/>
</dbReference>
<name>COBT_SHELP</name>
<keyword id="KW-0169">Cobalamin biosynthesis</keyword>
<keyword id="KW-0328">Glycosyltransferase</keyword>
<keyword id="KW-1185">Reference proteome</keyword>
<keyword id="KW-0808">Transferase</keyword>
<sequence>MFEVTVVSSEFDAKIQQKIDTKTKPLGALGALETLAMTIARVLGPDKPQITKPTLLVFAGDHGIAASGVSIAPSEVTTQMVMNFLKGGAAINLFCAQGGITMEVIDCGIAQEIHDQPKLINHRLGAGTGAIHREPAMTLGAVKQGFAMARERVALHHGRGCNLIAFGEMGIGNTSSAAAIMAALMGREAAECVGRGTGIDAATLARKQLLVEQALFLHREQLGDPYGVLACLGGFEIVQMTGAILAAAELKMLVLIDGFIATAAALAAVTIAPHARDYMIFAHESGERGHKLMLEHLNAQPLLSLGLRLGEGTGAALAVPLVQAAATFYNEMASLEEMGISI</sequence>
<gene>
    <name evidence="1" type="primary">cobT</name>
    <name type="ordered locus">Shew_0714</name>
</gene>
<reference key="1">
    <citation type="submission" date="2007-03" db="EMBL/GenBank/DDBJ databases">
        <title>Complete sequence of Shewanella loihica PV-4.</title>
        <authorList>
            <consortium name="US DOE Joint Genome Institute"/>
            <person name="Copeland A."/>
            <person name="Lucas S."/>
            <person name="Lapidus A."/>
            <person name="Barry K."/>
            <person name="Detter J.C."/>
            <person name="Glavina del Rio T."/>
            <person name="Hammon N."/>
            <person name="Israni S."/>
            <person name="Dalin E."/>
            <person name="Tice H."/>
            <person name="Pitluck S."/>
            <person name="Chain P."/>
            <person name="Malfatti S."/>
            <person name="Shin M."/>
            <person name="Vergez L."/>
            <person name="Schmutz J."/>
            <person name="Larimer F."/>
            <person name="Land M."/>
            <person name="Hauser L."/>
            <person name="Kyrpides N."/>
            <person name="Mikhailova N."/>
            <person name="Romine M.F."/>
            <person name="Serres G."/>
            <person name="Fredrickson J."/>
            <person name="Tiedje J."/>
            <person name="Richardson P."/>
        </authorList>
    </citation>
    <scope>NUCLEOTIDE SEQUENCE [LARGE SCALE GENOMIC DNA]</scope>
    <source>
        <strain>ATCC BAA-1088 / PV-4</strain>
    </source>
</reference>
<accession>A3QAT8</accession>
<evidence type="ECO:0000255" key="1">
    <source>
        <dbReference type="HAMAP-Rule" id="MF_00230"/>
    </source>
</evidence>